<dbReference type="EC" id="3.8.1.5" evidence="3"/>
<dbReference type="EMBL" id="AY150581">
    <property type="protein sequence ID" value="AAN64241.1"/>
    <property type="molecule type" value="Genomic_DNA"/>
</dbReference>
<dbReference type="EMBL" id="CP013070">
    <property type="protein sequence ID" value="APL96138.1"/>
    <property type="molecule type" value="Genomic_DNA"/>
</dbReference>
<dbReference type="RefSeq" id="WP_007682110.1">
    <property type="nucleotide sequence ID" value="NZ_CP013070.1"/>
</dbReference>
<dbReference type="SMR" id="A0A1L5BTC1"/>
<dbReference type="ESTHER" id="sphpi-linb">
    <property type="family name" value="Haloalkane_dehalogenase-HLD2"/>
</dbReference>
<dbReference type="KEGG" id="sinb:SIDU_17345"/>
<dbReference type="UniPathway" id="UPA00689"/>
<dbReference type="Proteomes" id="UP000004550">
    <property type="component" value="Chromosome"/>
</dbReference>
<dbReference type="GO" id="GO:0042597">
    <property type="term" value="C:periplasmic space"/>
    <property type="evidence" value="ECO:0007669"/>
    <property type="project" value="UniProtKB-SubCell"/>
</dbReference>
<dbReference type="GO" id="GO:0018786">
    <property type="term" value="F:haloalkane dehalogenase activity"/>
    <property type="evidence" value="ECO:0007669"/>
    <property type="project" value="UniProtKB-UniRule"/>
</dbReference>
<dbReference type="GO" id="GO:0009636">
    <property type="term" value="P:response to toxic substance"/>
    <property type="evidence" value="ECO:0007669"/>
    <property type="project" value="UniProtKB-KW"/>
</dbReference>
<dbReference type="Gene3D" id="3.40.50.1820">
    <property type="entry name" value="alpha/beta hydrolase"/>
    <property type="match status" value="1"/>
</dbReference>
<dbReference type="HAMAP" id="MF_01231">
    <property type="entry name" value="Haloalk_dehal_type2"/>
    <property type="match status" value="1"/>
</dbReference>
<dbReference type="InterPro" id="IPR000073">
    <property type="entry name" value="AB_hydrolase_1"/>
</dbReference>
<dbReference type="InterPro" id="IPR029058">
    <property type="entry name" value="AB_hydrolase_fold"/>
</dbReference>
<dbReference type="InterPro" id="IPR000639">
    <property type="entry name" value="Epox_hydrolase-like"/>
</dbReference>
<dbReference type="InterPro" id="IPR023594">
    <property type="entry name" value="Haloalkane_dehalogenase_2"/>
</dbReference>
<dbReference type="NCBIfam" id="NF002938">
    <property type="entry name" value="PRK03592.1"/>
    <property type="match status" value="1"/>
</dbReference>
<dbReference type="PANTHER" id="PTHR43329">
    <property type="entry name" value="EPOXIDE HYDROLASE"/>
    <property type="match status" value="1"/>
</dbReference>
<dbReference type="Pfam" id="PF00561">
    <property type="entry name" value="Abhydrolase_1"/>
    <property type="match status" value="1"/>
</dbReference>
<dbReference type="PRINTS" id="PR00412">
    <property type="entry name" value="EPOXHYDRLASE"/>
</dbReference>
<dbReference type="SUPFAM" id="SSF53474">
    <property type="entry name" value="alpha/beta-Hydrolases"/>
    <property type="match status" value="1"/>
</dbReference>
<accession>A0A1L5BTC1</accession>
<accession>P51698</accession>
<proteinExistence type="inferred from homology"/>
<gene>
    <name evidence="4" type="primary">linB</name>
    <name evidence="6" type="ORF">SIDU_17345</name>
</gene>
<evidence type="ECO:0000250" key="1">
    <source>
        <dbReference type="UniProtKB" id="D4Z2G1"/>
    </source>
</evidence>
<evidence type="ECO:0000255" key="2"/>
<evidence type="ECO:0000255" key="3">
    <source>
        <dbReference type="HAMAP-Rule" id="MF_01231"/>
    </source>
</evidence>
<evidence type="ECO:0000303" key="4">
    <source>
    </source>
</evidence>
<evidence type="ECO:0000305" key="5">
    <source>
    </source>
</evidence>
<evidence type="ECO:0000312" key="6">
    <source>
        <dbReference type="EMBL" id="APL96138.1"/>
    </source>
</evidence>
<reference key="1">
    <citation type="journal article" date="2002" name="Appl. Environ. Microbiol.">
        <title>Cloning and characterization of lin genes responsible for the degradation of hexachlorocyclohexane isomers by Sphingomonas paucimobilis strain B90.</title>
        <authorList>
            <person name="Kumari R."/>
            <person name="Subudhi S."/>
            <person name="Suar M."/>
            <person name="Dhingra G."/>
            <person name="Raina V."/>
            <person name="Dogra C."/>
            <person name="Lal S."/>
            <person name="van der Meer J.R."/>
            <person name="Holliger C."/>
            <person name="Lal R."/>
        </authorList>
    </citation>
    <scope>NUCLEOTIDE SEQUENCE [GENOMIC DNA]</scope>
    <scope>FUNCTION</scope>
    <scope>PATHWAY</scope>
    <source>
        <strain>B90</strain>
    </source>
</reference>
<reference key="2">
    <citation type="journal article" date="2012" name="J. Bacteriol.">
        <title>Genome sequence of Sphingobium indicum B90A, a hexachlorocyclohexane-degrading bacterium.</title>
        <authorList>
            <person name="Anand S."/>
            <person name="Sangwan N."/>
            <person name="Lata P."/>
            <person name="Kaur J."/>
            <person name="Dua A."/>
            <person name="Singh A.K."/>
            <person name="Verma M."/>
            <person name="Kaur J."/>
            <person name="Khurana J.P."/>
            <person name="Khurana P."/>
            <person name="Mathur S."/>
            <person name="Lal R."/>
        </authorList>
    </citation>
    <scope>NUCLEOTIDE SEQUENCE [LARGE SCALE GENOMIC DNA]</scope>
    <source>
        <strain>DSM 16412 / CCM 7286 / MTCC 6364 / B90A</strain>
    </source>
</reference>
<sequence>MSLGAKPFGEKKFIEIKGRRMAYIDEGTGDPILFQHGNPTSSYLWRNIMPHCAGLGRLIACDLIGMGDSDKLDPSGPERYTYAEHRDYLDALWEALDLGDRVVLVVHDWGSVLGFDWARRHRERVQGIAYMEAVTMPLEWADFPEQDRDLFQAFRSQAGEELVLQDNVFVEQVLPGLILRPLSEAEMAAYREPFLAAGEARRPTLSWPRQIPIAGTPADVVAIARDYAGWLSESPIPKLFINAEPGHLTTGRIRDFCRTWPNQTEITVAGAHFIQEDSPDEIGAAIAAFVRRLRPA</sequence>
<comment type="function">
    <text evidence="1 3 5">Catalyzes hydrolytic cleavage of carbon-halogen bonds in halogenated aliphatic compounds, leading to the formation of the corresponding primary alcohols, halide ions and protons (By similarity). Is involved in the degradation of the important environmental pollutant gamma-hexachlorocyclohexane (gamma-HCH or lindane) as it also catalyzes conversion of 1,3,4,6-tetrachloro-1,4-cyclohexadiene (1,4-TCDN) to 2,5-dichloro-2,5-cyclohexadiene-1,4-diol (2,5-DDOL) via the intermediate 2,4,5-trichloro-2,5-cyclohexadiene-1-ol (2,4,5-DNOL) (By similarity) (PubMed:12450824).</text>
</comment>
<comment type="catalytic activity">
    <reaction evidence="3">
        <text>1-haloalkane + H2O = a halide anion + a primary alcohol + H(+)</text>
        <dbReference type="Rhea" id="RHEA:19081"/>
        <dbReference type="ChEBI" id="CHEBI:15377"/>
        <dbReference type="ChEBI" id="CHEBI:15378"/>
        <dbReference type="ChEBI" id="CHEBI:15734"/>
        <dbReference type="ChEBI" id="CHEBI:16042"/>
        <dbReference type="ChEBI" id="CHEBI:18060"/>
        <dbReference type="EC" id="3.8.1.5"/>
    </reaction>
</comment>
<comment type="catalytic activity">
    <reaction evidence="1">
        <text>(3R,6R)-1,3,4,6-tetrachlorocyclohexa-1,4-diene + 2 H2O = 2,5-dichlorocyclohexa-2,5-dien-1,4-diol + 2 chloride + 2 H(+)</text>
        <dbReference type="Rhea" id="RHEA:11944"/>
        <dbReference type="ChEBI" id="CHEBI:15377"/>
        <dbReference type="ChEBI" id="CHEBI:15378"/>
        <dbReference type="ChEBI" id="CHEBI:17996"/>
        <dbReference type="ChEBI" id="CHEBI:18904"/>
        <dbReference type="ChEBI" id="CHEBI:28975"/>
    </reaction>
</comment>
<comment type="pathway">
    <text evidence="5">Xenobiotic degradation; gamma-hexachlorocyclohexane degradation.</text>
</comment>
<comment type="subunit">
    <text evidence="3">Monomer.</text>
</comment>
<comment type="subcellular location">
    <subcellularLocation>
        <location evidence="1">Periplasm</location>
    </subcellularLocation>
</comment>
<comment type="similarity">
    <text evidence="3">Belongs to the haloalkane dehalogenase family. Type 2 subfamily.</text>
</comment>
<keyword id="KW-0216">Detoxification</keyword>
<keyword id="KW-0378">Hydrolase</keyword>
<keyword id="KW-0574">Periplasm</keyword>
<name>LINB_SPHIB</name>
<organism>
    <name type="scientific">Sphingobium indicum (strain DSM 16412 / CCM 7286 / MTCC 6364 / B90A)</name>
    <dbReference type="NCBI Taxonomy" id="861109"/>
    <lineage>
        <taxon>Bacteria</taxon>
        <taxon>Pseudomonadati</taxon>
        <taxon>Pseudomonadota</taxon>
        <taxon>Alphaproteobacteria</taxon>
        <taxon>Sphingomonadales</taxon>
        <taxon>Sphingomonadaceae</taxon>
        <taxon>Sphingobium</taxon>
    </lineage>
</organism>
<feature type="chain" id="PRO_0000444940" description="Haloalkane dehalogenase">
    <location>
        <begin position="1"/>
        <end position="296"/>
    </location>
</feature>
<feature type="domain" description="AB hydrolase-1" evidence="2">
    <location>
        <begin position="31"/>
        <end position="155"/>
    </location>
</feature>
<feature type="active site" description="Nucleophile" evidence="3">
    <location>
        <position position="108"/>
    </location>
</feature>
<feature type="active site" description="Proton donor" evidence="3">
    <location>
        <position position="132"/>
    </location>
</feature>
<feature type="active site" description="Proton acceptor" evidence="3">
    <location>
        <position position="272"/>
    </location>
</feature>
<protein>
    <recommendedName>
        <fullName evidence="3">Haloalkane dehalogenase</fullName>
        <ecNumber evidence="3">3.8.1.5</ecNumber>
    </recommendedName>
    <alternativeName>
        <fullName evidence="1">1,3,4,6-tetrachloro-1,4-cyclohexadiene halidohydrolase</fullName>
        <shortName evidence="1">1,4-TCDN halidohydrolase</shortName>
    </alternativeName>
</protein>